<accession>A5USQ4</accession>
<sequence length="269" mass="28975">MDTILNRILTHKRVEVERQRIKIPDAQIRARAEAAPPPRDFAAALRAHRPIALIAEVKKASPSKGVLIENFDPLALAHTYASNGASAISVLTDVRFFQGSLKHLEGIRAMVDRGAVPPLPLLRKDFIIDPYQVAEARAYGADALLLIVAALDDETLAALLALTHSFGMQALVEVHNEDELRRALDAGASIIGVNNRDLHSFTTTLETTRRLAALLPSSNRPLLVSESGIFTAEHVALVRSWGADAILVGEALVTAPDISSKVRELGGGS</sequence>
<reference key="1">
    <citation type="submission" date="2007-04" db="EMBL/GenBank/DDBJ databases">
        <title>Complete sequence of Roseiflexus sp. RS-1.</title>
        <authorList>
            <consortium name="US DOE Joint Genome Institute"/>
            <person name="Copeland A."/>
            <person name="Lucas S."/>
            <person name="Lapidus A."/>
            <person name="Barry K."/>
            <person name="Detter J.C."/>
            <person name="Glavina del Rio T."/>
            <person name="Hammon N."/>
            <person name="Israni S."/>
            <person name="Dalin E."/>
            <person name="Tice H."/>
            <person name="Pitluck S."/>
            <person name="Chertkov O."/>
            <person name="Brettin T."/>
            <person name="Bruce D."/>
            <person name="Han C."/>
            <person name="Schmutz J."/>
            <person name="Larimer F."/>
            <person name="Land M."/>
            <person name="Hauser L."/>
            <person name="Kyrpides N."/>
            <person name="Mikhailova N."/>
            <person name="Bryant D.A."/>
            <person name="Richardson P."/>
        </authorList>
    </citation>
    <scope>NUCLEOTIDE SEQUENCE [LARGE SCALE GENOMIC DNA]</scope>
    <source>
        <strain>RS-1</strain>
    </source>
</reference>
<organism>
    <name type="scientific">Roseiflexus sp. (strain RS-1)</name>
    <dbReference type="NCBI Taxonomy" id="357808"/>
    <lineage>
        <taxon>Bacteria</taxon>
        <taxon>Bacillati</taxon>
        <taxon>Chloroflexota</taxon>
        <taxon>Chloroflexia</taxon>
        <taxon>Chloroflexales</taxon>
        <taxon>Roseiflexineae</taxon>
        <taxon>Roseiflexaceae</taxon>
        <taxon>Roseiflexus</taxon>
    </lineage>
</organism>
<feature type="chain" id="PRO_1000076426" description="Indole-3-glycerol phosphate synthase">
    <location>
        <begin position="1"/>
        <end position="269"/>
    </location>
</feature>
<gene>
    <name evidence="1" type="primary">trpC</name>
    <name type="ordered locus">RoseRS_1252</name>
</gene>
<evidence type="ECO:0000255" key="1">
    <source>
        <dbReference type="HAMAP-Rule" id="MF_00134"/>
    </source>
</evidence>
<keyword id="KW-0028">Amino-acid biosynthesis</keyword>
<keyword id="KW-0057">Aromatic amino acid biosynthesis</keyword>
<keyword id="KW-0210">Decarboxylase</keyword>
<keyword id="KW-0456">Lyase</keyword>
<keyword id="KW-0822">Tryptophan biosynthesis</keyword>
<name>TRPC_ROSS1</name>
<proteinExistence type="inferred from homology"/>
<protein>
    <recommendedName>
        <fullName evidence="1">Indole-3-glycerol phosphate synthase</fullName>
        <shortName evidence="1">IGPS</shortName>
        <ecNumber evidence="1">4.1.1.48</ecNumber>
    </recommendedName>
</protein>
<comment type="catalytic activity">
    <reaction evidence="1">
        <text>1-(2-carboxyphenylamino)-1-deoxy-D-ribulose 5-phosphate + H(+) = (1S,2R)-1-C-(indol-3-yl)glycerol 3-phosphate + CO2 + H2O</text>
        <dbReference type="Rhea" id="RHEA:23476"/>
        <dbReference type="ChEBI" id="CHEBI:15377"/>
        <dbReference type="ChEBI" id="CHEBI:15378"/>
        <dbReference type="ChEBI" id="CHEBI:16526"/>
        <dbReference type="ChEBI" id="CHEBI:58613"/>
        <dbReference type="ChEBI" id="CHEBI:58866"/>
        <dbReference type="EC" id="4.1.1.48"/>
    </reaction>
</comment>
<comment type="pathway">
    <text evidence="1">Amino-acid biosynthesis; L-tryptophan biosynthesis; L-tryptophan from chorismate: step 4/5.</text>
</comment>
<comment type="similarity">
    <text evidence="1">Belongs to the TrpC family.</text>
</comment>
<dbReference type="EC" id="4.1.1.48" evidence="1"/>
<dbReference type="EMBL" id="CP000686">
    <property type="protein sequence ID" value="ABQ89657.1"/>
    <property type="molecule type" value="Genomic_DNA"/>
</dbReference>
<dbReference type="RefSeq" id="WP_011956009.1">
    <property type="nucleotide sequence ID" value="NC_009523.1"/>
</dbReference>
<dbReference type="SMR" id="A5USQ4"/>
<dbReference type="STRING" id="357808.RoseRS_1252"/>
<dbReference type="KEGG" id="rrs:RoseRS_1252"/>
<dbReference type="eggNOG" id="COG0134">
    <property type="taxonomic scope" value="Bacteria"/>
</dbReference>
<dbReference type="HOGENOM" id="CLU_034247_2_0_0"/>
<dbReference type="OrthoDB" id="9804217at2"/>
<dbReference type="UniPathway" id="UPA00035">
    <property type="reaction ID" value="UER00043"/>
</dbReference>
<dbReference type="Proteomes" id="UP000006554">
    <property type="component" value="Chromosome"/>
</dbReference>
<dbReference type="GO" id="GO:0004425">
    <property type="term" value="F:indole-3-glycerol-phosphate synthase activity"/>
    <property type="evidence" value="ECO:0007669"/>
    <property type="project" value="UniProtKB-UniRule"/>
</dbReference>
<dbReference type="GO" id="GO:0004640">
    <property type="term" value="F:phosphoribosylanthranilate isomerase activity"/>
    <property type="evidence" value="ECO:0007669"/>
    <property type="project" value="TreeGrafter"/>
</dbReference>
<dbReference type="GO" id="GO:0000162">
    <property type="term" value="P:L-tryptophan biosynthetic process"/>
    <property type="evidence" value="ECO:0007669"/>
    <property type="project" value="UniProtKB-UniRule"/>
</dbReference>
<dbReference type="CDD" id="cd00331">
    <property type="entry name" value="IGPS"/>
    <property type="match status" value="1"/>
</dbReference>
<dbReference type="FunFam" id="3.20.20.70:FF:000024">
    <property type="entry name" value="Indole-3-glycerol phosphate synthase"/>
    <property type="match status" value="1"/>
</dbReference>
<dbReference type="Gene3D" id="3.20.20.70">
    <property type="entry name" value="Aldolase class I"/>
    <property type="match status" value="1"/>
</dbReference>
<dbReference type="HAMAP" id="MF_00134_B">
    <property type="entry name" value="IGPS_B"/>
    <property type="match status" value="1"/>
</dbReference>
<dbReference type="InterPro" id="IPR013785">
    <property type="entry name" value="Aldolase_TIM"/>
</dbReference>
<dbReference type="InterPro" id="IPR045186">
    <property type="entry name" value="Indole-3-glycerol_P_synth"/>
</dbReference>
<dbReference type="InterPro" id="IPR013798">
    <property type="entry name" value="Indole-3-glycerol_P_synth_dom"/>
</dbReference>
<dbReference type="InterPro" id="IPR001468">
    <property type="entry name" value="Indole-3-GlycerolPSynthase_CS"/>
</dbReference>
<dbReference type="InterPro" id="IPR011060">
    <property type="entry name" value="RibuloseP-bd_barrel"/>
</dbReference>
<dbReference type="NCBIfam" id="NF001377">
    <property type="entry name" value="PRK00278.2-4"/>
    <property type="match status" value="1"/>
</dbReference>
<dbReference type="PANTHER" id="PTHR22854:SF2">
    <property type="entry name" value="INDOLE-3-GLYCEROL-PHOSPHATE SYNTHASE"/>
    <property type="match status" value="1"/>
</dbReference>
<dbReference type="PANTHER" id="PTHR22854">
    <property type="entry name" value="TRYPTOPHAN BIOSYNTHESIS PROTEIN"/>
    <property type="match status" value="1"/>
</dbReference>
<dbReference type="Pfam" id="PF00218">
    <property type="entry name" value="IGPS"/>
    <property type="match status" value="1"/>
</dbReference>
<dbReference type="SUPFAM" id="SSF51366">
    <property type="entry name" value="Ribulose-phoshate binding barrel"/>
    <property type="match status" value="1"/>
</dbReference>
<dbReference type="PROSITE" id="PS00614">
    <property type="entry name" value="IGPS"/>
    <property type="match status" value="1"/>
</dbReference>